<reference key="1">
    <citation type="journal article" date="2003" name="Proc. Natl. Acad. Sci. U.S.A.">
        <title>The genome sequence of Blochmannia floridanus: comparative analysis of reduced genomes.</title>
        <authorList>
            <person name="Gil R."/>
            <person name="Silva F.J."/>
            <person name="Zientz E."/>
            <person name="Delmotte F."/>
            <person name="Gonzalez-Candelas F."/>
            <person name="Latorre A."/>
            <person name="Rausell C."/>
            <person name="Kamerbeek J."/>
            <person name="Gadau J."/>
            <person name="Hoelldobler B."/>
            <person name="van Ham R.C.H.J."/>
            <person name="Gross R."/>
            <person name="Moya A."/>
        </authorList>
    </citation>
    <scope>NUCLEOTIDE SEQUENCE [LARGE SCALE GENOMIC DNA]</scope>
</reference>
<sequence length="610" mass="69495">MSIMGLLSSEQLNQLKLVLDTLSKNQLIWLSGYLLGLVNSQTSTDIGVTASGVSAGLELKPDLIDNTIIVISASQTGNARNIAKQLYSDLVEAGLRAVLFSAGEYKFKKISEISLLIFITSTHGEGEPPEEALALYKYLFSEKALRMEKTSFIVLSLGDRSYEYFAKAGKDFDKRFEDLGANRLYDRVDLDVDFQSEVDKWKEKVVSLCKSKIVSIVSKDKCINIQNNIVFKKKNPVTSYCKEFPLIAYLLNRQKITSCNSLKDVHHLEFDISGSGLCYQPGDALGIWYENDYNLVYELLELLNLTGRESVQIKNQSMCLDEALVKYCDLTQNTPVVVKSIATISQDKILLNLLQNQNQLNSFCSTTPIVEMFYQISMTKQLSSQELIQILRPMRPRFYSIASAQSEVGEEIHITVSVVRYTINGRIRSGGASSYLVDRVQDHDEIRIFVESNDNFRLPKDPNVSIIMIGAGTGIAPFRSFMQQRALDKALGKNWLFFGNLKFTDDFLYQIEWKTYFKSGILNKIDTAWSRDQDYKVYVQDKLLSNGLELWDWIQKGAYIYVCGDAKYMARDVEQALVTVVSIHGNMNMDQSNDFWNEMRVQHRYQRDIY</sequence>
<gene>
    <name evidence="1" type="primary">cysJ</name>
    <name type="ordered locus">Bfl158</name>
</gene>
<dbReference type="EC" id="1.8.1.2" evidence="1"/>
<dbReference type="EMBL" id="BX248583">
    <property type="protein sequence ID" value="CAD83679.1"/>
    <property type="molecule type" value="Genomic_DNA"/>
</dbReference>
<dbReference type="SMR" id="Q7VQH2"/>
<dbReference type="STRING" id="203907.Bfl158"/>
<dbReference type="KEGG" id="bfl:Bfl158"/>
<dbReference type="eggNOG" id="COG0369">
    <property type="taxonomic scope" value="Bacteria"/>
</dbReference>
<dbReference type="HOGENOM" id="CLU_001570_17_7_6"/>
<dbReference type="UniPathway" id="UPA00140">
    <property type="reaction ID" value="UER00207"/>
</dbReference>
<dbReference type="Proteomes" id="UP000002192">
    <property type="component" value="Chromosome"/>
</dbReference>
<dbReference type="GO" id="GO:0005829">
    <property type="term" value="C:cytosol"/>
    <property type="evidence" value="ECO:0007669"/>
    <property type="project" value="TreeGrafter"/>
</dbReference>
<dbReference type="GO" id="GO:0050660">
    <property type="term" value="F:flavin adenine dinucleotide binding"/>
    <property type="evidence" value="ECO:0007669"/>
    <property type="project" value="InterPro"/>
</dbReference>
<dbReference type="GO" id="GO:0010181">
    <property type="term" value="F:FMN binding"/>
    <property type="evidence" value="ECO:0007669"/>
    <property type="project" value="InterPro"/>
</dbReference>
<dbReference type="GO" id="GO:0004783">
    <property type="term" value="F:sulfite reductase (NADPH) activity"/>
    <property type="evidence" value="ECO:0007669"/>
    <property type="project" value="UniProtKB-UniRule"/>
</dbReference>
<dbReference type="GO" id="GO:0019344">
    <property type="term" value="P:cysteine biosynthetic process"/>
    <property type="evidence" value="ECO:0007669"/>
    <property type="project" value="UniProtKB-KW"/>
</dbReference>
<dbReference type="GO" id="GO:0070814">
    <property type="term" value="P:hydrogen sulfide biosynthetic process"/>
    <property type="evidence" value="ECO:0007669"/>
    <property type="project" value="UniProtKB-UniRule"/>
</dbReference>
<dbReference type="GO" id="GO:0000103">
    <property type="term" value="P:sulfate assimilation"/>
    <property type="evidence" value="ECO:0007669"/>
    <property type="project" value="UniProtKB-UniRule"/>
</dbReference>
<dbReference type="CDD" id="cd06199">
    <property type="entry name" value="SiR"/>
    <property type="match status" value="1"/>
</dbReference>
<dbReference type="FunFam" id="3.40.50.80:FF:000001">
    <property type="entry name" value="NADPH--cytochrome P450 reductase 1"/>
    <property type="match status" value="1"/>
</dbReference>
<dbReference type="Gene3D" id="3.40.50.360">
    <property type="match status" value="1"/>
</dbReference>
<dbReference type="Gene3D" id="1.20.990.10">
    <property type="entry name" value="NADPH-cytochrome p450 Reductase, Chain A, domain 3"/>
    <property type="match status" value="1"/>
</dbReference>
<dbReference type="Gene3D" id="3.40.50.80">
    <property type="entry name" value="Nucleotide-binding domain of ferredoxin-NADP reductase (FNR) module"/>
    <property type="match status" value="1"/>
</dbReference>
<dbReference type="Gene3D" id="2.40.30.10">
    <property type="entry name" value="Translation factors"/>
    <property type="match status" value="1"/>
</dbReference>
<dbReference type="HAMAP" id="MF_01541">
    <property type="entry name" value="CysJ"/>
    <property type="match status" value="1"/>
</dbReference>
<dbReference type="InterPro" id="IPR010199">
    <property type="entry name" value="CysJ"/>
</dbReference>
<dbReference type="InterPro" id="IPR003097">
    <property type="entry name" value="CysJ-like_FAD-binding"/>
</dbReference>
<dbReference type="InterPro" id="IPR029758">
    <property type="entry name" value="CysJ_Proteobact"/>
</dbReference>
<dbReference type="InterPro" id="IPR017927">
    <property type="entry name" value="FAD-bd_FR_type"/>
</dbReference>
<dbReference type="InterPro" id="IPR001094">
    <property type="entry name" value="Flavdoxin-like"/>
</dbReference>
<dbReference type="InterPro" id="IPR008254">
    <property type="entry name" value="Flavodoxin/NO_synth"/>
</dbReference>
<dbReference type="InterPro" id="IPR001709">
    <property type="entry name" value="Flavoprot_Pyr_Nucl_cyt_Rdtase"/>
</dbReference>
<dbReference type="InterPro" id="IPR029039">
    <property type="entry name" value="Flavoprotein-like_sf"/>
</dbReference>
<dbReference type="InterPro" id="IPR039261">
    <property type="entry name" value="FNR_nucleotide-bd"/>
</dbReference>
<dbReference type="InterPro" id="IPR023173">
    <property type="entry name" value="NADPH_Cyt_P450_Rdtase_alpha"/>
</dbReference>
<dbReference type="InterPro" id="IPR001433">
    <property type="entry name" value="OxRdtase_FAD/NAD-bd"/>
</dbReference>
<dbReference type="InterPro" id="IPR017938">
    <property type="entry name" value="Riboflavin_synthase-like_b-brl"/>
</dbReference>
<dbReference type="NCBIfam" id="TIGR01931">
    <property type="entry name" value="cysJ"/>
    <property type="match status" value="1"/>
</dbReference>
<dbReference type="PANTHER" id="PTHR19384:SF128">
    <property type="entry name" value="NADPH OXIDOREDUCTASE A"/>
    <property type="match status" value="1"/>
</dbReference>
<dbReference type="PANTHER" id="PTHR19384">
    <property type="entry name" value="NITRIC OXIDE SYNTHASE-RELATED"/>
    <property type="match status" value="1"/>
</dbReference>
<dbReference type="Pfam" id="PF00667">
    <property type="entry name" value="FAD_binding_1"/>
    <property type="match status" value="1"/>
</dbReference>
<dbReference type="Pfam" id="PF00258">
    <property type="entry name" value="Flavodoxin_1"/>
    <property type="match status" value="1"/>
</dbReference>
<dbReference type="Pfam" id="PF00175">
    <property type="entry name" value="NAD_binding_1"/>
    <property type="match status" value="1"/>
</dbReference>
<dbReference type="PIRSF" id="PIRSF000207">
    <property type="entry name" value="SiR-FP_CysJ"/>
    <property type="match status" value="1"/>
</dbReference>
<dbReference type="PRINTS" id="PR00369">
    <property type="entry name" value="FLAVODOXIN"/>
</dbReference>
<dbReference type="PRINTS" id="PR00371">
    <property type="entry name" value="FPNCR"/>
</dbReference>
<dbReference type="SUPFAM" id="SSF52343">
    <property type="entry name" value="Ferredoxin reductase-like, C-terminal NADP-linked domain"/>
    <property type="match status" value="1"/>
</dbReference>
<dbReference type="SUPFAM" id="SSF52218">
    <property type="entry name" value="Flavoproteins"/>
    <property type="match status" value="1"/>
</dbReference>
<dbReference type="SUPFAM" id="SSF63380">
    <property type="entry name" value="Riboflavin synthase domain-like"/>
    <property type="match status" value="1"/>
</dbReference>
<dbReference type="PROSITE" id="PS51384">
    <property type="entry name" value="FAD_FR"/>
    <property type="match status" value="1"/>
</dbReference>
<dbReference type="PROSITE" id="PS50902">
    <property type="entry name" value="FLAVODOXIN_LIKE"/>
    <property type="match status" value="1"/>
</dbReference>
<accession>Q7VQH2</accession>
<keyword id="KW-0028">Amino-acid biosynthesis</keyword>
<keyword id="KW-0198">Cysteine biosynthesis</keyword>
<keyword id="KW-0249">Electron transport</keyword>
<keyword id="KW-0274">FAD</keyword>
<keyword id="KW-0285">Flavoprotein</keyword>
<keyword id="KW-0288">FMN</keyword>
<keyword id="KW-0521">NADP</keyword>
<keyword id="KW-0560">Oxidoreductase</keyword>
<keyword id="KW-1185">Reference proteome</keyword>
<keyword id="KW-0813">Transport</keyword>
<feature type="chain" id="PRO_0000199922" description="Sulfite reductase [NADPH] flavoprotein alpha-component">
    <location>
        <begin position="1"/>
        <end position="610"/>
    </location>
</feature>
<feature type="domain" description="Flavodoxin-like" evidence="1">
    <location>
        <begin position="68"/>
        <end position="206"/>
    </location>
</feature>
<feature type="domain" description="FAD-binding FR-type" evidence="1">
    <location>
        <begin position="243"/>
        <end position="459"/>
    </location>
</feature>
<feature type="binding site" evidence="1">
    <location>
        <begin position="74"/>
        <end position="79"/>
    </location>
    <ligand>
        <name>FMN</name>
        <dbReference type="ChEBI" id="CHEBI:58210"/>
    </ligand>
</feature>
<feature type="binding site" evidence="1">
    <location>
        <begin position="121"/>
        <end position="124"/>
    </location>
    <ligand>
        <name>FMN</name>
        <dbReference type="ChEBI" id="CHEBI:58210"/>
    </ligand>
</feature>
<feature type="binding site" evidence="1">
    <location>
        <begin position="157"/>
        <end position="166"/>
    </location>
    <ligand>
        <name>FMN</name>
        <dbReference type="ChEBI" id="CHEBI:58210"/>
    </ligand>
</feature>
<feature type="binding site" evidence="1">
    <location>
        <position position="331"/>
    </location>
    <ligand>
        <name>FAD</name>
        <dbReference type="ChEBI" id="CHEBI:57692"/>
    </ligand>
</feature>
<feature type="binding site" evidence="1">
    <location>
        <position position="365"/>
    </location>
    <ligand>
        <name>FAD</name>
        <dbReference type="ChEBI" id="CHEBI:57692"/>
    </ligand>
</feature>
<feature type="binding site" evidence="1">
    <location>
        <begin position="397"/>
        <end position="400"/>
    </location>
    <ligand>
        <name>FAD</name>
        <dbReference type="ChEBI" id="CHEBI:57692"/>
    </ligand>
</feature>
<feature type="binding site" evidence="1">
    <location>
        <begin position="415"/>
        <end position="417"/>
    </location>
    <ligand>
        <name>FAD</name>
        <dbReference type="ChEBI" id="CHEBI:57692"/>
    </ligand>
</feature>
<feature type="binding site" evidence="1">
    <location>
        <position position="421"/>
    </location>
    <ligand>
        <name>FAD</name>
        <dbReference type="ChEBI" id="CHEBI:57692"/>
    </ligand>
</feature>
<feature type="binding site" evidence="1">
    <location>
        <begin position="430"/>
        <end position="433"/>
    </location>
    <ligand>
        <name>FAD</name>
        <dbReference type="ChEBI" id="CHEBI:57692"/>
    </ligand>
</feature>
<feature type="binding site" evidence="1">
    <location>
        <begin position="530"/>
        <end position="531"/>
    </location>
    <ligand>
        <name>NADP(+)</name>
        <dbReference type="ChEBI" id="CHEBI:58349"/>
    </ligand>
</feature>
<feature type="binding site" evidence="1">
    <location>
        <begin position="536"/>
        <end position="540"/>
    </location>
    <ligand>
        <name>NADP(+)</name>
        <dbReference type="ChEBI" id="CHEBI:58349"/>
    </ligand>
</feature>
<feature type="binding site" evidence="1">
    <location>
        <position position="572"/>
    </location>
    <ligand>
        <name>NADP(+)</name>
        <dbReference type="ChEBI" id="CHEBI:58349"/>
    </ligand>
</feature>
<feature type="binding site" evidence="1">
    <location>
        <position position="610"/>
    </location>
    <ligand>
        <name>FAD</name>
        <dbReference type="ChEBI" id="CHEBI:57692"/>
    </ligand>
</feature>
<organism>
    <name type="scientific">Blochmanniella floridana</name>
    <dbReference type="NCBI Taxonomy" id="203907"/>
    <lineage>
        <taxon>Bacteria</taxon>
        <taxon>Pseudomonadati</taxon>
        <taxon>Pseudomonadota</taxon>
        <taxon>Gammaproteobacteria</taxon>
        <taxon>Enterobacterales</taxon>
        <taxon>Enterobacteriaceae</taxon>
        <taxon>ant endosymbionts</taxon>
        <taxon>Candidatus Blochmanniella</taxon>
    </lineage>
</organism>
<proteinExistence type="inferred from homology"/>
<evidence type="ECO:0000255" key="1">
    <source>
        <dbReference type="HAMAP-Rule" id="MF_01541"/>
    </source>
</evidence>
<name>CYSJ_BLOFL</name>
<protein>
    <recommendedName>
        <fullName evidence="1">Sulfite reductase [NADPH] flavoprotein alpha-component</fullName>
        <shortName evidence="1">SiR-FP</shortName>
        <ecNumber evidence="1">1.8.1.2</ecNumber>
    </recommendedName>
</protein>
<comment type="function">
    <text evidence="1">Component of the sulfite reductase complex that catalyzes the 6-electron reduction of sulfite to sulfide. This is one of several activities required for the biosynthesis of L-cysteine from sulfate. The flavoprotein component catalyzes the electron flow from NADPH -&gt; FAD -&gt; FMN to the hemoprotein component.</text>
</comment>
<comment type="catalytic activity">
    <reaction evidence="1">
        <text>hydrogen sulfide + 3 NADP(+) + 3 H2O = sulfite + 3 NADPH + 4 H(+)</text>
        <dbReference type="Rhea" id="RHEA:13801"/>
        <dbReference type="ChEBI" id="CHEBI:15377"/>
        <dbReference type="ChEBI" id="CHEBI:15378"/>
        <dbReference type="ChEBI" id="CHEBI:17359"/>
        <dbReference type="ChEBI" id="CHEBI:29919"/>
        <dbReference type="ChEBI" id="CHEBI:57783"/>
        <dbReference type="ChEBI" id="CHEBI:58349"/>
        <dbReference type="EC" id="1.8.1.2"/>
    </reaction>
</comment>
<comment type="cofactor">
    <cofactor evidence="1">
        <name>FAD</name>
        <dbReference type="ChEBI" id="CHEBI:57692"/>
    </cofactor>
    <text evidence="1">Binds 1 FAD per subunit.</text>
</comment>
<comment type="cofactor">
    <cofactor evidence="1">
        <name>FMN</name>
        <dbReference type="ChEBI" id="CHEBI:58210"/>
    </cofactor>
    <text evidence="1">Binds 1 FMN per subunit.</text>
</comment>
<comment type="pathway">
    <text evidence="1">Sulfur metabolism; hydrogen sulfide biosynthesis; hydrogen sulfide from sulfite (NADPH route): step 1/1.</text>
</comment>
<comment type="subunit">
    <text evidence="1">Alpha(8)-beta(8). The alpha component is a flavoprotein, the beta component is a hemoprotein.</text>
</comment>
<comment type="similarity">
    <text evidence="1">Belongs to the NADPH-dependent sulphite reductase flavoprotein subunit CysJ family.</text>
</comment>
<comment type="similarity">
    <text evidence="1">In the N-terminal section; belongs to the flavodoxin family.</text>
</comment>
<comment type="similarity">
    <text evidence="1">In the C-terminal section; belongs to the flavoprotein pyridine nucleotide cytochrome reductase family.</text>
</comment>